<protein>
    <recommendedName>
        <fullName evidence="2">Lens fiber major intrinsic protein</fullName>
    </recommendedName>
    <alternativeName>
        <fullName evidence="9">Aquaporin-0</fullName>
    </alternativeName>
</protein>
<proteinExistence type="evidence at protein level"/>
<accession>Q6J8I9</accession>
<reference evidence="12" key="1">
    <citation type="journal article" date="2004" name="Nature">
        <title>Aquaporin-0 membrane junctions reveal the structure of a closed water pore.</title>
        <authorList>
            <person name="Gonen T."/>
            <person name="Sliz P."/>
            <person name="Kistler J."/>
            <person name="Cheng Y."/>
            <person name="Walz T."/>
        </authorList>
    </citation>
    <scope>NUCLEOTIDE SEQUENCE [GENOMIC DNA]</scope>
    <scope>TISSUE SPECIFICITY</scope>
    <scope>SUBCELLULAR LOCATION</scope>
    <scope>FUNCTION</scope>
    <scope>STRUCTURE BY ELECTRON MICROSCOPY (3.0 ANGSTROMS) OF 5-239</scope>
    <scope>SUBUNIT</scope>
</reference>
<reference key="2">
    <citation type="journal article" date="2004" name="J. Mol. Biol.">
        <title>Aquaporin-0 membrane junctions form upon proteolytic cleavage.</title>
        <authorList>
            <person name="Gonen T."/>
            <person name="Cheng Y."/>
            <person name="Kistler J."/>
            <person name="Walz T."/>
        </authorList>
    </citation>
    <scope>PARTIAL PROTEIN SEQUENCE</scope>
    <scope>FUNCTION</scope>
    <scope>SUBCELLULAR LOCATION</scope>
    <scope>SUBUNIT</scope>
    <scope>CLEAVAGE SITE</scope>
    <scope>TISSUE SPECIFICITY</scope>
</reference>
<reference evidence="13" key="3">
    <citation type="journal article" date="2005" name="Nature">
        <title>Lipid-protein interactions in double-layered two-dimensional AQP0 crystals.</title>
        <authorList>
            <person name="Gonen T."/>
            <person name="Cheng Y."/>
            <person name="Sliz P."/>
            <person name="Hiroaki Y."/>
            <person name="Fujiyoshi Y."/>
            <person name="Harrison S.C."/>
            <person name="Walz T."/>
        </authorList>
    </citation>
    <scope>X-RAY CRYSTALLOGRAPHY (1.90 ANGSTROMS)</scope>
    <scope>SUBUNIT</scope>
    <scope>FUNCTION</scope>
    <scope>TOPOLOGY</scope>
    <scope>MOTIF</scope>
</reference>
<reference evidence="15" key="4">
    <citation type="journal article" date="2010" name="EMBO J.">
        <title>Principles of membrane protein interactions with annular lipids deduced from aquaporin-0 2D crystals.</title>
        <authorList>
            <person name="Hite R.K."/>
            <person name="Li Z."/>
            <person name="Walz T."/>
        </authorList>
    </citation>
    <scope>STRUCTURE BY ELECTRON MICROSCOPY (2.50 ANGSTROMS) OF 7-226</scope>
    <scope>TOPOLOGY</scope>
    <scope>SUBUNIT</scope>
    <scope>FUNCTION</scope>
</reference>
<reference evidence="14" key="5">
    <citation type="journal article" date="2013" name="Nat. Struct. Mol. Biol.">
        <title>Allosteric mechanism of water-channel gating by Ca(2+)-calmodulin.</title>
        <authorList>
            <person name="Reichow S.L."/>
            <person name="Clemens D.M."/>
            <person name="Freites J.A."/>
            <person name="Nemeth-Cahalan K.L."/>
            <person name="Heyden M."/>
            <person name="Tobias D.J."/>
            <person name="Hall J.E."/>
            <person name="Gonen T."/>
        </authorList>
    </citation>
    <scope>STRUCTURE BY ELECTRON MICROSCOPY (25 ANGSTROMS) IN COMPLEX WITH CALM AND CALCIUM</scope>
    <scope>FUNCTION</scope>
    <scope>TRANSPORTER ACTIVITY</scope>
    <scope>ACTIVITY REGULATION</scope>
    <scope>SUBCELLULAR LOCATION</scope>
    <scope>SUBUNIT</scope>
    <scope>TOPOLOGY</scope>
    <scope>TISSUE SPECIFICITY</scope>
    <scope>MUTAGENESIS OF TYR-149</scope>
</reference>
<name>MIP_SHEEP</name>
<sequence length="263" mass="28263">MWELRSASFWRAIFAEFFATLFYVFFGLGASLRWAPGPLHVLQVALAFGLALATLVQAVGHISGAHVNPAVTFAFLVGSQMSLLRAICYVVAQLLGAVAGAAVLYSVTPPAVRGNLALNTLHPGVSVGQATIVEIFLTLQFVLCIFATYDERRNGRLGSVALAVGFSLTLGHLFGMYYTGAGMNPARSFAPAILTRNFTNHWVYWVGPVIGAGLGSLLYDFLLFPRLKSVSERLSILKGTRPSESNGQPEVTGEPVELKTQAL</sequence>
<organism>
    <name type="scientific">Ovis aries</name>
    <name type="common">Sheep</name>
    <dbReference type="NCBI Taxonomy" id="9940"/>
    <lineage>
        <taxon>Eukaryota</taxon>
        <taxon>Metazoa</taxon>
        <taxon>Chordata</taxon>
        <taxon>Craniata</taxon>
        <taxon>Vertebrata</taxon>
        <taxon>Euteleostomi</taxon>
        <taxon>Mammalia</taxon>
        <taxon>Eutheria</taxon>
        <taxon>Laurasiatheria</taxon>
        <taxon>Artiodactyla</taxon>
        <taxon>Ruminantia</taxon>
        <taxon>Pecora</taxon>
        <taxon>Bovidae</taxon>
        <taxon>Caprinae</taxon>
        <taxon>Ovis</taxon>
    </lineage>
</organism>
<feature type="chain" id="PRO_0000063915" description="Lens fiber major intrinsic protein">
    <location>
        <begin position="1"/>
        <end position="263"/>
    </location>
</feature>
<feature type="topological domain" description="Cytoplasmic" evidence="6">
    <location>
        <begin position="1"/>
        <end position="12"/>
    </location>
</feature>
<feature type="transmembrane region" description="Helical; Name=1" evidence="6 13">
    <location>
        <begin position="13"/>
        <end position="30"/>
    </location>
</feature>
<feature type="topological domain" description="Extracellular" evidence="6">
    <location>
        <begin position="31"/>
        <end position="40"/>
    </location>
</feature>
<feature type="transmembrane region" description="Helical; Name=2" evidence="6 13">
    <location>
        <begin position="41"/>
        <end position="59"/>
    </location>
</feature>
<feature type="topological domain" description="Cytoplasmic" evidence="6">
    <location>
        <begin position="60"/>
        <end position="63"/>
    </location>
</feature>
<feature type="intramembrane region" description="Discontinuously helical" evidence="6 13">
    <location>
        <begin position="64"/>
        <end position="76"/>
    </location>
</feature>
<feature type="topological domain" description="Cytoplasmic" evidence="6">
    <location>
        <begin position="77"/>
        <end position="85"/>
    </location>
</feature>
<feature type="transmembrane region" description="Helical; Name=3" evidence="6 13">
    <location>
        <begin position="86"/>
        <end position="106"/>
    </location>
</feature>
<feature type="topological domain" description="Extracellular" evidence="6">
    <location>
        <begin position="107"/>
        <end position="126"/>
    </location>
</feature>
<feature type="transmembrane region" description="Helical; Name=4" evidence="6 13">
    <location>
        <begin position="127"/>
        <end position="147"/>
    </location>
</feature>
<feature type="topological domain" description="Cytoplasmic" evidence="6">
    <location>
        <begin position="148"/>
        <end position="157"/>
    </location>
</feature>
<feature type="transmembrane region" description="Helical; Name=5" evidence="6 13">
    <location>
        <begin position="158"/>
        <end position="175"/>
    </location>
</feature>
<feature type="topological domain" description="Extracellular" evidence="6">
    <location>
        <begin position="176"/>
        <end position="177"/>
    </location>
</feature>
<feature type="intramembrane region" description="Discontinuously helical" evidence="6 13">
    <location>
        <begin position="178"/>
        <end position="193"/>
    </location>
</feature>
<feature type="topological domain" description="Extracellular" evidence="6">
    <location>
        <begin position="194"/>
        <end position="200"/>
    </location>
</feature>
<feature type="transmembrane region" description="Helical; Name=6" evidence="6 13">
    <location>
        <begin position="201"/>
        <end position="218"/>
    </location>
</feature>
<feature type="topological domain" description="Cytoplasmic" evidence="6">
    <location>
        <begin position="219"/>
        <end position="263"/>
    </location>
</feature>
<feature type="region of interest" description="Interaction with CALM" evidence="1">
    <location>
        <begin position="227"/>
        <end position="237"/>
    </location>
</feature>
<feature type="region of interest" description="Disordered" evidence="3">
    <location>
        <begin position="240"/>
        <end position="263"/>
    </location>
</feature>
<feature type="short sequence motif" description="NPA 1" evidence="11">
    <location>
        <begin position="68"/>
        <end position="70"/>
    </location>
</feature>
<feature type="short sequence motif" description="NPA 2" evidence="11">
    <location>
        <begin position="184"/>
        <end position="186"/>
    </location>
</feature>
<feature type="site" description="Important for water channel gating" evidence="1">
    <location>
        <position position="149"/>
    </location>
</feature>
<feature type="site" description="Cleavage; promotes interactions between tetramers from adjoining membranes" evidence="5">
    <location>
        <begin position="234"/>
        <end position="235"/>
    </location>
</feature>
<feature type="site" description="Cleavage; promotes interactions between tetramers from adjoining membranes" evidence="5">
    <location>
        <begin position="243"/>
        <end position="244"/>
    </location>
</feature>
<feature type="site" description="Interaction with BFSP1" evidence="1">
    <location>
        <position position="246"/>
    </location>
</feature>
<feature type="site" description="interaction with BFSP1" evidence="1">
    <location>
        <position position="250"/>
    </location>
</feature>
<feature type="modified residue" description="Phosphoserine" evidence="1">
    <location>
        <position position="235"/>
    </location>
</feature>
<feature type="modified residue" description="Phosphoserine" evidence="1">
    <location>
        <position position="243"/>
    </location>
</feature>
<feature type="modified residue" description="Phosphoserine" evidence="1">
    <location>
        <position position="245"/>
    </location>
</feature>
<feature type="mutagenesis site" description="Loss of inhibition by calcium." evidence="8">
    <original>Y</original>
    <variation>G</variation>
    <location>
        <position position="149"/>
    </location>
</feature>
<feature type="mutagenesis site" description="Decreased water channel activity. Loss of inhibition by calcium." evidence="8">
    <original>Y</original>
    <variation>L</variation>
    <location>
        <position position="149"/>
    </location>
</feature>
<feature type="mutagenesis site" description="Decreased water channel activity. Loss of inhibition by calcium." evidence="8">
    <original>Y</original>
    <variation>S</variation>
    <location>
        <position position="149"/>
    </location>
</feature>
<feature type="helix" evidence="16">
    <location>
        <begin position="6"/>
        <end position="31"/>
    </location>
</feature>
<feature type="strand" evidence="16">
    <location>
        <begin position="36"/>
        <end position="38"/>
    </location>
</feature>
<feature type="helix" evidence="16">
    <location>
        <begin position="40"/>
        <end position="58"/>
    </location>
</feature>
<feature type="helix" evidence="16">
    <location>
        <begin position="59"/>
        <end position="61"/>
    </location>
</feature>
<feature type="helix" evidence="16">
    <location>
        <begin position="69"/>
        <end position="77"/>
    </location>
</feature>
<feature type="helix" evidence="16">
    <location>
        <begin position="83"/>
        <end position="107"/>
    </location>
</feature>
<feature type="turn" evidence="16">
    <location>
        <begin position="110"/>
        <end position="112"/>
    </location>
</feature>
<feature type="turn" evidence="17">
    <location>
        <begin position="114"/>
        <end position="116"/>
    </location>
</feature>
<feature type="helix" evidence="16">
    <location>
        <begin position="127"/>
        <end position="148"/>
    </location>
</feature>
<feature type="helix" evidence="16">
    <location>
        <begin position="160"/>
        <end position="175"/>
    </location>
</feature>
<feature type="turn" evidence="16">
    <location>
        <begin position="176"/>
        <end position="178"/>
    </location>
</feature>
<feature type="helix" evidence="16">
    <location>
        <begin position="185"/>
        <end position="195"/>
    </location>
</feature>
<feature type="turn" evidence="17">
    <location>
        <begin position="199"/>
        <end position="202"/>
    </location>
</feature>
<feature type="helix" evidence="16">
    <location>
        <begin position="203"/>
        <end position="220"/>
    </location>
</feature>
<feature type="turn" evidence="16">
    <location>
        <begin position="221"/>
        <end position="223"/>
    </location>
</feature>
<feature type="helix" evidence="16">
    <location>
        <begin position="230"/>
        <end position="233"/>
    </location>
</feature>
<feature type="helix" evidence="16">
    <location>
        <begin position="234"/>
        <end position="236"/>
    </location>
</feature>
<keyword id="KW-0002">3D-structure</keyword>
<keyword id="KW-0965">Cell junction</keyword>
<keyword id="KW-1003">Cell membrane</keyword>
<keyword id="KW-0903">Direct protein sequencing</keyword>
<keyword id="KW-0273">Eye lens protein</keyword>
<keyword id="KW-0449">Lipoprotein</keyword>
<keyword id="KW-0472">Membrane</keyword>
<keyword id="KW-0597">Phosphoprotein</keyword>
<keyword id="KW-1185">Reference proteome</keyword>
<keyword id="KW-0677">Repeat</keyword>
<keyword id="KW-0716">Sensory transduction</keyword>
<keyword id="KW-0812">Transmembrane</keyword>
<keyword id="KW-1133">Transmembrane helix</keyword>
<keyword id="KW-0813">Transport</keyword>
<gene>
    <name evidence="2" type="primary">MIP</name>
    <name evidence="9" type="synonym">AQP0</name>
</gene>
<dbReference type="EMBL" id="AY573927">
    <property type="protein sequence ID" value="AAT09161.1"/>
    <property type="molecule type" value="Genomic_DNA"/>
</dbReference>
<dbReference type="RefSeq" id="NP_001153230.1">
    <property type="nucleotide sequence ID" value="NM_001159758.1"/>
</dbReference>
<dbReference type="RefSeq" id="XP_060267562.1">
    <property type="nucleotide sequence ID" value="XM_060411579.1"/>
</dbReference>
<dbReference type="PDB" id="1SOR">
    <property type="method" value="X-ray"/>
    <property type="resolution" value="3.00 A"/>
    <property type="chains" value="A=5-239"/>
</dbReference>
<dbReference type="PDB" id="2B6O">
    <property type="method" value="X-ray"/>
    <property type="resolution" value="1.90 A"/>
    <property type="chains" value="A=1-263"/>
</dbReference>
<dbReference type="PDB" id="2B6P">
    <property type="method" value="X-ray"/>
    <property type="resolution" value="2.40 A"/>
    <property type="chains" value="A=1-263"/>
</dbReference>
<dbReference type="PDB" id="3J41">
    <property type="method" value="EM"/>
    <property type="resolution" value="25.00 A"/>
    <property type="chains" value="A/B/C/D=1-263"/>
</dbReference>
<dbReference type="PDB" id="3M9I">
    <property type="method" value="EM"/>
    <property type="resolution" value="2.50 A"/>
    <property type="chains" value="A=7-226"/>
</dbReference>
<dbReference type="PDB" id="8SJX">
    <property type="method" value="EM"/>
    <property type="resolution" value="2.50 A"/>
    <property type="chains" value="A=1-263"/>
</dbReference>
<dbReference type="PDB" id="8SJY">
    <property type="method" value="EM"/>
    <property type="resolution" value="2.50 A"/>
    <property type="chains" value="A=1-263"/>
</dbReference>
<dbReference type="PDBsum" id="1SOR"/>
<dbReference type="PDBsum" id="2B6O"/>
<dbReference type="PDBsum" id="2B6P"/>
<dbReference type="PDBsum" id="3J41"/>
<dbReference type="PDBsum" id="3M9I"/>
<dbReference type="PDBsum" id="8SJX"/>
<dbReference type="PDBsum" id="8SJY"/>
<dbReference type="EMDB" id="EMD-5802"/>
<dbReference type="EMDB" id="EMD-5803"/>
<dbReference type="SMR" id="Q6J8I9"/>
<dbReference type="DIP" id="DIP-46234N"/>
<dbReference type="IntAct" id="Q6J8I9">
    <property type="interactions" value="1"/>
</dbReference>
<dbReference type="STRING" id="9940.ENSOARP00000009442"/>
<dbReference type="PaxDb" id="9940-ENSOARP00000009442"/>
<dbReference type="Ensembl" id="ENSOART00180014221">
    <property type="protein sequence ID" value="ENSOARP00180007557"/>
    <property type="gene ID" value="ENSOARG00180008583"/>
</dbReference>
<dbReference type="Ensembl" id="ENSOART00215086541">
    <property type="protein sequence ID" value="ENSOARP00215047397"/>
    <property type="gene ID" value="ENSOARG00215051075"/>
</dbReference>
<dbReference type="Ensembl" id="ENSOART00220014650">
    <property type="protein sequence ID" value="ENSOARP00220008626"/>
    <property type="gene ID" value="ENSOARG00220008626"/>
</dbReference>
<dbReference type="Ensembl" id="ENSOART00225091789">
    <property type="protein sequence ID" value="ENSOARP00225048820"/>
    <property type="gene ID" value="ENSOARG00225054979"/>
</dbReference>
<dbReference type="GeneID" id="100294602"/>
<dbReference type="KEGG" id="oas:100294602"/>
<dbReference type="CTD" id="4284"/>
<dbReference type="eggNOG" id="KOG0223">
    <property type="taxonomic scope" value="Eukaryota"/>
</dbReference>
<dbReference type="HOGENOM" id="CLU_020019_3_3_1"/>
<dbReference type="OMA" id="LALNTMH"/>
<dbReference type="OrthoDB" id="3222at2759"/>
<dbReference type="EvolutionaryTrace" id="Q6J8I9"/>
<dbReference type="Proteomes" id="UP000002356">
    <property type="component" value="Chromosome 3"/>
</dbReference>
<dbReference type="Bgee" id="ENSOARG00000008796">
    <property type="expression patterns" value="Expressed in abdominal lymph node and 47 other cell types or tissues"/>
</dbReference>
<dbReference type="GO" id="GO:0070161">
    <property type="term" value="C:anchoring junction"/>
    <property type="evidence" value="ECO:0007669"/>
    <property type="project" value="UniProtKB-SubCell"/>
</dbReference>
<dbReference type="GO" id="GO:0016324">
    <property type="term" value="C:apical plasma membrane"/>
    <property type="evidence" value="ECO:0007669"/>
    <property type="project" value="TreeGrafter"/>
</dbReference>
<dbReference type="GO" id="GO:0005886">
    <property type="term" value="C:plasma membrane"/>
    <property type="evidence" value="ECO:0000250"/>
    <property type="project" value="UniProtKB"/>
</dbReference>
<dbReference type="GO" id="GO:0005516">
    <property type="term" value="F:calmodulin binding"/>
    <property type="evidence" value="ECO:0000250"/>
    <property type="project" value="UniProtKB"/>
</dbReference>
<dbReference type="GO" id="GO:0098631">
    <property type="term" value="F:cell adhesion mediator activity"/>
    <property type="evidence" value="ECO:0000250"/>
    <property type="project" value="UniProtKB"/>
</dbReference>
<dbReference type="GO" id="GO:0005212">
    <property type="term" value="F:structural constituent of eye lens"/>
    <property type="evidence" value="ECO:0007669"/>
    <property type="project" value="UniProtKB-KW"/>
</dbReference>
<dbReference type="GO" id="GO:0015250">
    <property type="term" value="F:water channel activity"/>
    <property type="evidence" value="ECO:0000250"/>
    <property type="project" value="UniProtKB"/>
</dbReference>
<dbReference type="GO" id="GO:1990349">
    <property type="term" value="P:gap junction-mediated intercellular transport"/>
    <property type="evidence" value="ECO:0007669"/>
    <property type="project" value="Ensembl"/>
</dbReference>
<dbReference type="GO" id="GO:0034109">
    <property type="term" value="P:homotypic cell-cell adhesion"/>
    <property type="evidence" value="ECO:0000250"/>
    <property type="project" value="UniProtKB"/>
</dbReference>
<dbReference type="GO" id="GO:0002088">
    <property type="term" value="P:lens development in camera-type eye"/>
    <property type="evidence" value="ECO:0007669"/>
    <property type="project" value="Ensembl"/>
</dbReference>
<dbReference type="GO" id="GO:0036438">
    <property type="term" value="P:maintenance of lens transparency"/>
    <property type="evidence" value="ECO:0000250"/>
    <property type="project" value="UniProtKB"/>
</dbReference>
<dbReference type="GO" id="GO:0007601">
    <property type="term" value="P:visual perception"/>
    <property type="evidence" value="ECO:0007669"/>
    <property type="project" value="Ensembl"/>
</dbReference>
<dbReference type="GO" id="GO:0006833">
    <property type="term" value="P:water transport"/>
    <property type="evidence" value="ECO:0000250"/>
    <property type="project" value="UniProtKB"/>
</dbReference>
<dbReference type="CDD" id="cd00333">
    <property type="entry name" value="MIP"/>
    <property type="match status" value="1"/>
</dbReference>
<dbReference type="FunFam" id="1.20.1080.10:FF:000003">
    <property type="entry name" value="Lens fiber major intrinsic"/>
    <property type="match status" value="1"/>
</dbReference>
<dbReference type="Gene3D" id="1.20.1080.10">
    <property type="entry name" value="Glycerol uptake facilitator protein"/>
    <property type="match status" value="1"/>
</dbReference>
<dbReference type="InterPro" id="IPR023271">
    <property type="entry name" value="Aquaporin-like"/>
</dbReference>
<dbReference type="InterPro" id="IPR034294">
    <property type="entry name" value="Aquaporin_transptr"/>
</dbReference>
<dbReference type="InterPro" id="IPR000425">
    <property type="entry name" value="MIP"/>
</dbReference>
<dbReference type="InterPro" id="IPR022357">
    <property type="entry name" value="MIP_CS"/>
</dbReference>
<dbReference type="NCBIfam" id="TIGR00861">
    <property type="entry name" value="MIP"/>
    <property type="match status" value="1"/>
</dbReference>
<dbReference type="PANTHER" id="PTHR19139">
    <property type="entry name" value="AQUAPORIN TRANSPORTER"/>
    <property type="match status" value="1"/>
</dbReference>
<dbReference type="PANTHER" id="PTHR19139:SF39">
    <property type="entry name" value="LENS FIBER MAJOR INTRINSIC PROTEIN"/>
    <property type="match status" value="1"/>
</dbReference>
<dbReference type="Pfam" id="PF00230">
    <property type="entry name" value="MIP"/>
    <property type="match status" value="1"/>
</dbReference>
<dbReference type="PRINTS" id="PR02014">
    <property type="entry name" value="AQUAPORIN2"/>
</dbReference>
<dbReference type="PRINTS" id="PR00783">
    <property type="entry name" value="MINTRINSICP"/>
</dbReference>
<dbReference type="SUPFAM" id="SSF81338">
    <property type="entry name" value="Aquaporin-like"/>
    <property type="match status" value="1"/>
</dbReference>
<dbReference type="PROSITE" id="PS00221">
    <property type="entry name" value="MIP"/>
    <property type="match status" value="1"/>
</dbReference>
<evidence type="ECO:0000250" key="1">
    <source>
        <dbReference type="UniProtKB" id="P06624"/>
    </source>
</evidence>
<evidence type="ECO:0000250" key="2">
    <source>
        <dbReference type="UniProtKB" id="P30301"/>
    </source>
</evidence>
<evidence type="ECO:0000256" key="3">
    <source>
        <dbReference type="SAM" id="MobiDB-lite"/>
    </source>
</evidence>
<evidence type="ECO:0000269" key="4">
    <source>
    </source>
</evidence>
<evidence type="ECO:0000269" key="5">
    <source>
    </source>
</evidence>
<evidence type="ECO:0000269" key="6">
    <source>
    </source>
</evidence>
<evidence type="ECO:0000269" key="7">
    <source>
    </source>
</evidence>
<evidence type="ECO:0000269" key="8">
    <source>
    </source>
</evidence>
<evidence type="ECO:0000303" key="9">
    <source>
    </source>
</evidence>
<evidence type="ECO:0000305" key="10"/>
<evidence type="ECO:0000305" key="11">
    <source>
    </source>
</evidence>
<evidence type="ECO:0007744" key="12">
    <source>
        <dbReference type="PDB" id="1SOR"/>
    </source>
</evidence>
<evidence type="ECO:0007744" key="13">
    <source>
        <dbReference type="PDB" id="2B6O"/>
    </source>
</evidence>
<evidence type="ECO:0007744" key="14">
    <source>
        <dbReference type="PDB" id="3J41"/>
    </source>
</evidence>
<evidence type="ECO:0007744" key="15">
    <source>
        <dbReference type="PDB" id="3M9I"/>
    </source>
</evidence>
<evidence type="ECO:0007829" key="16">
    <source>
        <dbReference type="PDB" id="2B6O"/>
    </source>
</evidence>
<evidence type="ECO:0007829" key="17">
    <source>
        <dbReference type="PDB" id="8SJY"/>
    </source>
</evidence>
<comment type="function">
    <text evidence="4 5 6 7 8">Aquaporins form homotetrameric transmembrane channels, with each monomer independently mediating water transport across the plasma membrane along its osmotic gradient (PubMed:15141214, PubMed:23893133). Specifically expressed in lens fiber cells, this aquaporin is crucial for maintaining lens water homeostasis and transparency. Beyond water permeability, it also acts as a cell-to-cell adhesion molecule, forming thin junctions between lens fiber cells that are essential for maintaining the ordered structure and transparency of the lens (PubMed:15141214, PubMed:15351655, PubMed:16319884, PubMed:20389283).</text>
</comment>
<comment type="catalytic activity">
    <reaction evidence="8">
        <text>H2O(in) = H2O(out)</text>
        <dbReference type="Rhea" id="RHEA:29667"/>
        <dbReference type="ChEBI" id="CHEBI:15377"/>
    </reaction>
</comment>
<comment type="activity regulation">
    <text evidence="8">The water channel activity is inhibited by calcium through calmodulin/CALM.</text>
</comment>
<comment type="subunit">
    <text evidence="2 4 8">Homotetramer; each monomer provides an independent water pore (PubMed:15141214). Two homotetramers on opposing membranes can dimerize, forming a cell-cell junction (PubMed:15141214). Interacts with CALM; the calcium-calmodulin/CALM complex interacts with the cytoplasmic domains of two aquaporins, leading to channel closure (PubMed:23893133). Interacts with BFSP1 (via C-terminus); prevents calcium-dependent inhibition of the water channel activity (By similarity).</text>
</comment>
<comment type="interaction">
    <interactant intactId="EBI-15728125">
        <id>Q6J8I9</id>
    </interactant>
    <interactant intactId="EBI-397435">
        <id>P62158</id>
        <label>CALM3</label>
    </interactant>
    <organismsDiffer>true</organismsDiffer>
    <experiments>2</experiments>
</comment>
<comment type="subcellular location">
    <subcellularLocation>
        <location evidence="4 5 8">Cell membrane</location>
        <topology evidence="6 7 8">Multi-pass membrane protein</topology>
    </subcellularLocation>
    <subcellularLocation>
        <location evidence="4 5 8">Cell junction</location>
    </subcellularLocation>
    <text evidence="4 5 8">Localizes to thin cell-cell junctions in lens fiber cells.</text>
</comment>
<comment type="tissue specificity">
    <text evidence="4 5 8">Detected in eye lens (at protein level).</text>
</comment>
<comment type="domain">
    <text evidence="11">Aquaporins contain two tandem repeats each containing three membrane-spanning domains and a pore-forming loop with the signature motif Asn-Pro-Ala (NPA).</text>
</comment>
<comment type="PTM">
    <text evidence="5">Subject to partial proteolytic cleavage in the eye lens core. Partial proteolysis promotes interactions between tetramers from adjoining membranes.</text>
</comment>
<comment type="PTM">
    <text evidence="2">Fatty acylated at Met-1 and Lys-238. The acyl modifications, in decreasing order of ion abundance, are: oleoyl (C18:1) &gt; palmitoyl (C16:0) &gt; stearoyl (C18:0) &gt; eicosenoyl (C20:1) &gt; dihomo-gamma-linolenoyl (C20:3) &gt; palmitoleoyl (C16:1) &gt; eicosadienoyl (C20:2).</text>
</comment>
<comment type="similarity">
    <text evidence="10">Belongs to the MIP/aquaporin (TC 1.A.8) family.</text>
</comment>